<evidence type="ECO:0000255" key="1">
    <source>
        <dbReference type="HAMAP-Rule" id="MF_00664"/>
    </source>
</evidence>
<comment type="function">
    <text evidence="1">Catalyzes the formation of phosphatidylethanolamine (PtdEtn) from phosphatidylserine (PtdSer).</text>
</comment>
<comment type="catalytic activity">
    <reaction evidence="1">
        <text>a 1,2-diacyl-sn-glycero-3-phospho-L-serine + H(+) = a 1,2-diacyl-sn-glycero-3-phosphoethanolamine + CO2</text>
        <dbReference type="Rhea" id="RHEA:20828"/>
        <dbReference type="ChEBI" id="CHEBI:15378"/>
        <dbReference type="ChEBI" id="CHEBI:16526"/>
        <dbReference type="ChEBI" id="CHEBI:57262"/>
        <dbReference type="ChEBI" id="CHEBI:64612"/>
        <dbReference type="EC" id="4.1.1.65"/>
    </reaction>
</comment>
<comment type="cofactor">
    <cofactor evidence="1">
        <name>pyruvate</name>
        <dbReference type="ChEBI" id="CHEBI:15361"/>
    </cofactor>
    <text evidence="1">Binds 1 pyruvoyl group covalently per subunit.</text>
</comment>
<comment type="pathway">
    <text evidence="1">Phospholipid metabolism; phosphatidylethanolamine biosynthesis; phosphatidylethanolamine from CDP-diacylglycerol: step 2/2.</text>
</comment>
<comment type="subunit">
    <text evidence="1">Heterodimer of a large membrane-associated beta subunit and a small pyruvoyl-containing alpha subunit.</text>
</comment>
<comment type="subcellular location">
    <subcellularLocation>
        <location evidence="1">Cell membrane</location>
        <topology evidence="1">Peripheral membrane protein</topology>
    </subcellularLocation>
</comment>
<comment type="PTM">
    <text evidence="1">Is synthesized initially as an inactive proenzyme. Formation of the active enzyme involves a self-maturation process in which the active site pyruvoyl group is generated from an internal serine residue via an autocatalytic post-translational modification. Two non-identical subunits are generated from the proenzyme in this reaction, and the pyruvate is formed at the N-terminus of the alpha chain, which is derived from the carboxyl end of the proenzyme. The post-translation cleavage follows an unusual pathway, termed non-hydrolytic serinolysis, in which the side chain hydroxyl group of the serine supplies its oxygen atom to form the C-terminus of the beta chain, while the remainder of the serine residue undergoes an oxidative deamination to produce ammonia and the pyruvoyl prosthetic group on the alpha chain.</text>
</comment>
<comment type="similarity">
    <text evidence="1">Belongs to the phosphatidylserine decarboxylase family. PSD-A subfamily.</text>
</comment>
<organism>
    <name type="scientific">Mycobacterium sp. (strain JLS)</name>
    <dbReference type="NCBI Taxonomy" id="164757"/>
    <lineage>
        <taxon>Bacteria</taxon>
        <taxon>Bacillati</taxon>
        <taxon>Actinomycetota</taxon>
        <taxon>Actinomycetes</taxon>
        <taxon>Mycobacteriales</taxon>
        <taxon>Mycobacteriaceae</taxon>
        <taxon>Mycobacterium</taxon>
    </lineage>
</organism>
<dbReference type="EC" id="4.1.1.65" evidence="1"/>
<dbReference type="EMBL" id="CP000580">
    <property type="protein sequence ID" value="ABN96397.1"/>
    <property type="molecule type" value="Genomic_DNA"/>
</dbReference>
<dbReference type="KEGG" id="mjl:Mjls_0585"/>
<dbReference type="HOGENOM" id="CLU_072492_0_0_11"/>
<dbReference type="BioCyc" id="MSP164757:G1G8C-592-MONOMER"/>
<dbReference type="UniPathway" id="UPA00558">
    <property type="reaction ID" value="UER00616"/>
</dbReference>
<dbReference type="GO" id="GO:0005886">
    <property type="term" value="C:plasma membrane"/>
    <property type="evidence" value="ECO:0007669"/>
    <property type="project" value="UniProtKB-SubCell"/>
</dbReference>
<dbReference type="GO" id="GO:0004609">
    <property type="term" value="F:phosphatidylserine decarboxylase activity"/>
    <property type="evidence" value="ECO:0007669"/>
    <property type="project" value="UniProtKB-UniRule"/>
</dbReference>
<dbReference type="GO" id="GO:0006646">
    <property type="term" value="P:phosphatidylethanolamine biosynthetic process"/>
    <property type="evidence" value="ECO:0007669"/>
    <property type="project" value="UniProtKB-UniRule"/>
</dbReference>
<dbReference type="HAMAP" id="MF_00664">
    <property type="entry name" value="PS_decarb_PSD_A"/>
    <property type="match status" value="1"/>
</dbReference>
<dbReference type="InterPro" id="IPR003817">
    <property type="entry name" value="PS_Dcarbxylase"/>
</dbReference>
<dbReference type="InterPro" id="IPR033175">
    <property type="entry name" value="PSD-A"/>
</dbReference>
<dbReference type="NCBIfam" id="NF003679">
    <property type="entry name" value="PRK05305.1-3"/>
    <property type="match status" value="1"/>
</dbReference>
<dbReference type="PANTHER" id="PTHR35809">
    <property type="entry name" value="ARCHAETIDYLSERINE DECARBOXYLASE PROENZYME-RELATED"/>
    <property type="match status" value="1"/>
</dbReference>
<dbReference type="PANTHER" id="PTHR35809:SF1">
    <property type="entry name" value="ARCHAETIDYLSERINE DECARBOXYLASE PROENZYME-RELATED"/>
    <property type="match status" value="1"/>
</dbReference>
<dbReference type="Pfam" id="PF02666">
    <property type="entry name" value="PS_Dcarbxylase"/>
    <property type="match status" value="1"/>
</dbReference>
<keyword id="KW-1003">Cell membrane</keyword>
<keyword id="KW-0210">Decarboxylase</keyword>
<keyword id="KW-0444">Lipid biosynthesis</keyword>
<keyword id="KW-0443">Lipid metabolism</keyword>
<keyword id="KW-0456">Lyase</keyword>
<keyword id="KW-0472">Membrane</keyword>
<keyword id="KW-0594">Phospholipid biosynthesis</keyword>
<keyword id="KW-1208">Phospholipid metabolism</keyword>
<keyword id="KW-0670">Pyruvate</keyword>
<keyword id="KW-0865">Zymogen</keyword>
<reference key="1">
    <citation type="submission" date="2007-02" db="EMBL/GenBank/DDBJ databases">
        <title>Complete sequence of Mycobacterium sp. JLS.</title>
        <authorList>
            <consortium name="US DOE Joint Genome Institute"/>
            <person name="Copeland A."/>
            <person name="Lucas S."/>
            <person name="Lapidus A."/>
            <person name="Barry K."/>
            <person name="Detter J.C."/>
            <person name="Glavina del Rio T."/>
            <person name="Hammon N."/>
            <person name="Israni S."/>
            <person name="Dalin E."/>
            <person name="Tice H."/>
            <person name="Pitluck S."/>
            <person name="Chain P."/>
            <person name="Malfatti S."/>
            <person name="Shin M."/>
            <person name="Vergez L."/>
            <person name="Schmutz J."/>
            <person name="Larimer F."/>
            <person name="Land M."/>
            <person name="Hauser L."/>
            <person name="Kyrpides N."/>
            <person name="Mikhailova N."/>
            <person name="Miller C.D."/>
            <person name="Anderson A.J."/>
            <person name="Sims R.C."/>
            <person name="Richardson P."/>
        </authorList>
    </citation>
    <scope>NUCLEOTIDE SEQUENCE [LARGE SCALE GENOMIC DNA]</scope>
    <source>
        <strain>JLS</strain>
    </source>
</reference>
<accession>A3PU20</accession>
<name>PSD_MYCSJ</name>
<protein>
    <recommendedName>
        <fullName evidence="1">Phosphatidylserine decarboxylase proenzyme</fullName>
        <ecNumber evidence="1">4.1.1.65</ecNumber>
    </recommendedName>
    <component>
        <recommendedName>
            <fullName evidence="1">Phosphatidylserine decarboxylase alpha chain</fullName>
        </recommendedName>
    </component>
    <component>
        <recommendedName>
            <fullName evidence="1">Phosphatidylserine decarboxylase beta chain</fullName>
        </recommendedName>
    </component>
</protein>
<gene>
    <name evidence="1" type="primary">psd</name>
    <name type="ordered locus">Mjls_0585</name>
</gene>
<sequence>MARRPSTDDLRSGPERFMALVKTTVPPVHPAGLPFIGASLALAAAGRRNRWVRGAGLVAAGANAAFFRHPPRVPPTRPGVVVAPADGLICLVEDAEPPAELNLPARPVPRVSIFLSIFDAHVQRIPISGEVVAVEHRPGLFGSAELAAASEDNERNSVVIRTDTGAQVIAVQIAGLVARRIVCDLTTGDKVTIGDTYGLIRYGSRLDTYLPEGTDIQVLPGQRAVGGETILAELP</sequence>
<proteinExistence type="inferred from homology"/>
<feature type="chain" id="PRO_1000026656" description="Phosphatidylserine decarboxylase beta chain" evidence="1">
    <location>
        <begin position="1"/>
        <end position="203"/>
    </location>
</feature>
<feature type="chain" id="PRO_1000026657" description="Phosphatidylserine decarboxylase alpha chain" evidence="1">
    <location>
        <begin position="204"/>
        <end position="235"/>
    </location>
</feature>
<feature type="active site" description="Schiff-base intermediate with substrate; via pyruvic acid" evidence="1">
    <location>
        <position position="204"/>
    </location>
</feature>
<feature type="site" description="Cleavage (non-hydrolytic); by autocatalysis" evidence="1">
    <location>
        <begin position="203"/>
        <end position="204"/>
    </location>
</feature>
<feature type="modified residue" description="Pyruvic acid (Ser); by autocatalysis" evidence="1">
    <location>
        <position position="204"/>
    </location>
</feature>